<feature type="chain" id="PRO_0000323352" description="Small ribosomal subunit protein uS11">
    <location>
        <begin position="1"/>
        <end position="124"/>
    </location>
</feature>
<feature type="region of interest" description="Disordered" evidence="2">
    <location>
        <begin position="102"/>
        <end position="124"/>
    </location>
</feature>
<gene>
    <name evidence="1" type="primary">rps11</name>
    <name type="ordered locus">MmarC5_0272</name>
</gene>
<sequence>MSQKWGLVHIYASYNNTILHVTDLTGAETIAKVSGGMIVRNQRDESSPYAAMQAAFKIADLMRDKGIDQVHVKVRATGGQKSKNPGPGAQAAIRALSRAGIRIGRIEDATPIPHDGTTPKRKNR</sequence>
<evidence type="ECO:0000255" key="1">
    <source>
        <dbReference type="HAMAP-Rule" id="MF_01310"/>
    </source>
</evidence>
<evidence type="ECO:0000256" key="2">
    <source>
        <dbReference type="SAM" id="MobiDB-lite"/>
    </source>
</evidence>
<evidence type="ECO:0000305" key="3"/>
<comment type="function">
    <text evidence="1">Located on the platform of the 30S subunit.</text>
</comment>
<comment type="subunit">
    <text evidence="1">Part of the 30S ribosomal subunit.</text>
</comment>
<comment type="similarity">
    <text evidence="1">Belongs to the universal ribosomal protein uS11 family.</text>
</comment>
<keyword id="KW-0687">Ribonucleoprotein</keyword>
<keyword id="KW-0689">Ribosomal protein</keyword>
<keyword id="KW-0694">RNA-binding</keyword>
<keyword id="KW-0699">rRNA-binding</keyword>
<protein>
    <recommendedName>
        <fullName evidence="1">Small ribosomal subunit protein uS11</fullName>
    </recommendedName>
    <alternativeName>
        <fullName evidence="3">30S ribosomal protein S11</fullName>
    </alternativeName>
</protein>
<accession>A4FWL3</accession>
<organism>
    <name type="scientific">Methanococcus maripaludis (strain C5 / ATCC BAA-1333)</name>
    <dbReference type="NCBI Taxonomy" id="402880"/>
    <lineage>
        <taxon>Archaea</taxon>
        <taxon>Methanobacteriati</taxon>
        <taxon>Methanobacteriota</taxon>
        <taxon>Methanomada group</taxon>
        <taxon>Methanococci</taxon>
        <taxon>Methanococcales</taxon>
        <taxon>Methanococcaceae</taxon>
        <taxon>Methanococcus</taxon>
    </lineage>
</organism>
<reference key="1">
    <citation type="submission" date="2007-03" db="EMBL/GenBank/DDBJ databases">
        <title>Complete sequence of chromosome of Methanococcus maripaludis C5.</title>
        <authorList>
            <consortium name="US DOE Joint Genome Institute"/>
            <person name="Copeland A."/>
            <person name="Lucas S."/>
            <person name="Lapidus A."/>
            <person name="Barry K."/>
            <person name="Glavina del Rio T."/>
            <person name="Dalin E."/>
            <person name="Tice H."/>
            <person name="Pitluck S."/>
            <person name="Chertkov O."/>
            <person name="Brettin T."/>
            <person name="Bruce D."/>
            <person name="Han C."/>
            <person name="Detter J.C."/>
            <person name="Schmutz J."/>
            <person name="Larimer F."/>
            <person name="Land M."/>
            <person name="Hauser L."/>
            <person name="Kyrpides N."/>
            <person name="Mikhailova N."/>
            <person name="Sieprawska-Lupa M."/>
            <person name="Whitman W.B."/>
            <person name="Richardson P."/>
        </authorList>
    </citation>
    <scope>NUCLEOTIDE SEQUENCE [LARGE SCALE GENOMIC DNA]</scope>
    <source>
        <strain>C5 / ATCC BAA-1333</strain>
    </source>
</reference>
<dbReference type="EMBL" id="CP000609">
    <property type="protein sequence ID" value="ABO34588.1"/>
    <property type="molecule type" value="Genomic_DNA"/>
</dbReference>
<dbReference type="RefSeq" id="WP_011171265.1">
    <property type="nucleotide sequence ID" value="NC_009135.1"/>
</dbReference>
<dbReference type="SMR" id="A4FWL3"/>
<dbReference type="STRING" id="402880.MmarC5_0272"/>
<dbReference type="GeneID" id="4929220"/>
<dbReference type="KEGG" id="mmq:MmarC5_0272"/>
<dbReference type="eggNOG" id="arCOG04240">
    <property type="taxonomic scope" value="Archaea"/>
</dbReference>
<dbReference type="HOGENOM" id="CLU_072439_6_1_2"/>
<dbReference type="OrthoDB" id="12054at2157"/>
<dbReference type="Proteomes" id="UP000000253">
    <property type="component" value="Chromosome"/>
</dbReference>
<dbReference type="GO" id="GO:1990904">
    <property type="term" value="C:ribonucleoprotein complex"/>
    <property type="evidence" value="ECO:0007669"/>
    <property type="project" value="UniProtKB-KW"/>
</dbReference>
<dbReference type="GO" id="GO:0005840">
    <property type="term" value="C:ribosome"/>
    <property type="evidence" value="ECO:0007669"/>
    <property type="project" value="UniProtKB-KW"/>
</dbReference>
<dbReference type="GO" id="GO:0019843">
    <property type="term" value="F:rRNA binding"/>
    <property type="evidence" value="ECO:0007669"/>
    <property type="project" value="UniProtKB-UniRule"/>
</dbReference>
<dbReference type="GO" id="GO:0003735">
    <property type="term" value="F:structural constituent of ribosome"/>
    <property type="evidence" value="ECO:0007669"/>
    <property type="project" value="InterPro"/>
</dbReference>
<dbReference type="GO" id="GO:0006412">
    <property type="term" value="P:translation"/>
    <property type="evidence" value="ECO:0007669"/>
    <property type="project" value="UniProtKB-UniRule"/>
</dbReference>
<dbReference type="FunFam" id="3.30.420.80:FF:000007">
    <property type="entry name" value="30S ribosomal protein S11"/>
    <property type="match status" value="1"/>
</dbReference>
<dbReference type="Gene3D" id="3.30.420.80">
    <property type="entry name" value="Ribosomal protein S11"/>
    <property type="match status" value="1"/>
</dbReference>
<dbReference type="HAMAP" id="MF_01310">
    <property type="entry name" value="Ribosomal_uS11"/>
    <property type="match status" value="1"/>
</dbReference>
<dbReference type="InterPro" id="IPR001971">
    <property type="entry name" value="Ribosomal_uS11"/>
</dbReference>
<dbReference type="InterPro" id="IPR019961">
    <property type="entry name" value="Ribosomal_uS11_archaeal"/>
</dbReference>
<dbReference type="InterPro" id="IPR018102">
    <property type="entry name" value="Ribosomal_uS11_CS"/>
</dbReference>
<dbReference type="InterPro" id="IPR036967">
    <property type="entry name" value="Ribosomal_uS11_sf"/>
</dbReference>
<dbReference type="NCBIfam" id="TIGR03628">
    <property type="entry name" value="arch_S11P"/>
    <property type="match status" value="1"/>
</dbReference>
<dbReference type="NCBIfam" id="NF007176">
    <property type="entry name" value="PRK09607.1"/>
    <property type="match status" value="1"/>
</dbReference>
<dbReference type="PANTHER" id="PTHR11759">
    <property type="entry name" value="40S RIBOSOMAL PROTEIN S14/30S RIBOSOMAL PROTEIN S11"/>
    <property type="match status" value="1"/>
</dbReference>
<dbReference type="Pfam" id="PF00411">
    <property type="entry name" value="Ribosomal_S11"/>
    <property type="match status" value="1"/>
</dbReference>
<dbReference type="PIRSF" id="PIRSF002131">
    <property type="entry name" value="Ribosomal_S11"/>
    <property type="match status" value="1"/>
</dbReference>
<dbReference type="SUPFAM" id="SSF53137">
    <property type="entry name" value="Translational machinery components"/>
    <property type="match status" value="1"/>
</dbReference>
<dbReference type="PROSITE" id="PS00054">
    <property type="entry name" value="RIBOSOMAL_S11"/>
    <property type="match status" value="1"/>
</dbReference>
<proteinExistence type="inferred from homology"/>
<name>RS11_METM5</name>